<protein>
    <recommendedName>
        <fullName>4-(hydroxymethyl)benzenesulfonate dehydrogenase TsaD1</fullName>
        <ecNumber>1.1.1.257</ecNumber>
    </recommendedName>
    <alternativeName>
        <fullName>Toluenesulfonate aldehyde dehydrogenase TsaD</fullName>
    </alternativeName>
</protein>
<geneLocation type="plasmid">
    <name>pTSA</name>
</geneLocation>
<evidence type="ECO:0000250" key="1"/>
<evidence type="ECO:0000255" key="2">
    <source>
        <dbReference type="PROSITE-ProRule" id="PRU10008"/>
    </source>
</evidence>
<evidence type="ECO:0000269" key="3">
    <source>
    </source>
</evidence>
<evidence type="ECO:0000269" key="4">
    <source>
    </source>
</evidence>
<evidence type="ECO:0000269" key="5">
    <source ref="5"/>
</evidence>
<evidence type="ECO:0000305" key="6"/>
<feature type="chain" id="PRO_0000419117" description="4-(hydroxymethyl)benzenesulfonate dehydrogenase TsaD1">
    <location>
        <begin position="1"/>
        <end position="476"/>
    </location>
</feature>
<feature type="active site" description="Proton acceptor" evidence="2">
    <location>
        <position position="252"/>
    </location>
</feature>
<feature type="active site" description="Nucleophile" evidence="2">
    <location>
        <position position="286"/>
    </location>
</feature>
<feature type="binding site" evidence="1">
    <location>
        <begin position="154"/>
        <end position="155"/>
    </location>
    <ligand>
        <name>NAD(+)</name>
        <dbReference type="ChEBI" id="CHEBI:57540"/>
    </ligand>
</feature>
<feature type="binding site" evidence="1">
    <location>
        <begin position="178"/>
        <end position="181"/>
    </location>
    <ligand>
        <name>NAD(+)</name>
        <dbReference type="ChEBI" id="CHEBI:57540"/>
    </ligand>
</feature>
<feature type="binding site" evidence="1">
    <location>
        <begin position="230"/>
        <end position="231"/>
    </location>
    <ligand>
        <name>NAD(+)</name>
        <dbReference type="ChEBI" id="CHEBI:57540"/>
    </ligand>
</feature>
<feature type="binding site" evidence="1">
    <location>
        <position position="253"/>
    </location>
    <ligand>
        <name>NAD(+)</name>
        <dbReference type="ChEBI" id="CHEBI:57540"/>
    </ligand>
</feature>
<feature type="binding site" evidence="1">
    <location>
        <position position="380"/>
    </location>
    <ligand>
        <name>NAD(+)</name>
        <dbReference type="ChEBI" id="CHEBI:57540"/>
    </ligand>
</feature>
<accession>P94682</accession>
<name>TSAD1_COMTE</name>
<proteinExistence type="evidence at protein level"/>
<gene>
    <name type="primary">tsaD1</name>
</gene>
<keyword id="KW-0058">Aromatic hydrocarbons catabolism</keyword>
<keyword id="KW-0903">Direct protein sequencing</keyword>
<keyword id="KW-0520">NAD</keyword>
<keyword id="KW-0521">NADP</keyword>
<keyword id="KW-0560">Oxidoreductase</keyword>
<keyword id="KW-0614">Plasmid</keyword>
<dbReference type="EC" id="1.1.1.257"/>
<dbReference type="EMBL" id="AH010657">
    <property type="protein sequence ID" value="AAC44808.1"/>
    <property type="molecule type" value="Genomic_DNA"/>
</dbReference>
<dbReference type="SMR" id="P94682"/>
<dbReference type="KEGG" id="ag:AAC44808"/>
<dbReference type="BioCyc" id="MetaCyc:TSADCOTE-MONOMER"/>
<dbReference type="GO" id="GO:0018462">
    <property type="term" value="F:4-(hydroxymethyl)benzenesulfonate dehydrogenase activity"/>
    <property type="evidence" value="ECO:0007669"/>
    <property type="project" value="UniProtKB-EC"/>
</dbReference>
<dbReference type="GO" id="GO:0004777">
    <property type="term" value="F:succinate-semialdehyde dehydrogenase (NAD+) activity"/>
    <property type="evidence" value="ECO:0007669"/>
    <property type="project" value="TreeGrafter"/>
</dbReference>
<dbReference type="GO" id="GO:0009450">
    <property type="term" value="P:gamma-aminobutyric acid catabolic process"/>
    <property type="evidence" value="ECO:0007669"/>
    <property type="project" value="TreeGrafter"/>
</dbReference>
<dbReference type="CDD" id="cd07103">
    <property type="entry name" value="ALDH_F5_SSADH_GabD"/>
    <property type="match status" value="1"/>
</dbReference>
<dbReference type="FunFam" id="3.40.605.10:FF:000007">
    <property type="entry name" value="NAD/NADP-dependent betaine aldehyde dehydrogenase"/>
    <property type="match status" value="1"/>
</dbReference>
<dbReference type="Gene3D" id="3.40.605.10">
    <property type="entry name" value="Aldehyde Dehydrogenase, Chain A, domain 1"/>
    <property type="match status" value="1"/>
</dbReference>
<dbReference type="Gene3D" id="3.40.309.10">
    <property type="entry name" value="Aldehyde Dehydrogenase, Chain A, domain 2"/>
    <property type="match status" value="1"/>
</dbReference>
<dbReference type="InterPro" id="IPR016161">
    <property type="entry name" value="Ald_DH/histidinol_DH"/>
</dbReference>
<dbReference type="InterPro" id="IPR016163">
    <property type="entry name" value="Ald_DH_C"/>
</dbReference>
<dbReference type="InterPro" id="IPR016160">
    <property type="entry name" value="Ald_DH_CS_CYS"/>
</dbReference>
<dbReference type="InterPro" id="IPR016162">
    <property type="entry name" value="Ald_DH_N"/>
</dbReference>
<dbReference type="InterPro" id="IPR015590">
    <property type="entry name" value="Aldehyde_DH_dom"/>
</dbReference>
<dbReference type="InterPro" id="IPR050740">
    <property type="entry name" value="Aldehyde_DH_Superfamily"/>
</dbReference>
<dbReference type="PANTHER" id="PTHR43353">
    <property type="entry name" value="SUCCINATE-SEMIALDEHYDE DEHYDROGENASE, MITOCHONDRIAL"/>
    <property type="match status" value="1"/>
</dbReference>
<dbReference type="PANTHER" id="PTHR43353:SF5">
    <property type="entry name" value="SUCCINATE-SEMIALDEHYDE DEHYDROGENASE, MITOCHONDRIAL"/>
    <property type="match status" value="1"/>
</dbReference>
<dbReference type="Pfam" id="PF00171">
    <property type="entry name" value="Aldedh"/>
    <property type="match status" value="1"/>
</dbReference>
<dbReference type="SUPFAM" id="SSF53720">
    <property type="entry name" value="ALDH-like"/>
    <property type="match status" value="1"/>
</dbReference>
<dbReference type="PROSITE" id="PS00070">
    <property type="entry name" value="ALDEHYDE_DEHYDR_CYS"/>
    <property type="match status" value="1"/>
</dbReference>
<reference key="1">
    <citation type="journal article" date="1997" name="J. Bacteriol.">
        <title>Characterization of the p-toluenesulfonate operon tsaMBCD and tsaR in Comamonas testosteroni T-2.</title>
        <authorList>
            <person name="Junker F."/>
            <person name="Kiewitz R."/>
            <person name="Cook A.M."/>
        </authorList>
    </citation>
    <scope>NUCLEOTIDE SEQUENCE [GENOMIC DNA]</scope>
    <scope>PROTEIN SEQUENCE OF 1-11</scope>
    <scope>SUBUNIT</scope>
    <source>
        <strain>DSM 6577 / T-2</strain>
    </source>
</reference>
<reference key="2">
    <citation type="journal article" date="2001" name="Appl. Environ. Microbiol.">
        <title>Map of the IncP1beta plasmid pTSA encoding the widespread genes (tsa) for p-toluenesulfonate degradation in Comamonas testosteroni T-2.</title>
        <authorList>
            <person name="Tralau T."/>
            <person name="Cook A.M."/>
            <person name="Ruff J."/>
        </authorList>
    </citation>
    <scope>NUCLEOTIDE SEQUENCE [GENOMIC DNA]</scope>
    <source>
        <strain>DSM 6577 / T-2</strain>
    </source>
</reference>
<reference key="3">
    <citation type="journal article" date="2003" name="Arch. Microbiol.">
        <title>An additional regulator, TsaQ, is involved with TsaR in regulation of transport during the degradation of p-toluenesulfonate in Comamonas testosteroni T-2.</title>
        <authorList>
            <person name="Tralau T."/>
            <person name="Cook A.M."/>
            <person name="Ruff J."/>
        </authorList>
    </citation>
    <scope>NUCLEOTIDE SEQUENCE [GENOMIC DNA]</scope>
    <source>
        <strain>DSM 6577 / T-2</strain>
    </source>
</reference>
<reference key="4">
    <citation type="journal article" date="2004" name="Biochem. J.">
        <title>A novel outer-membrane anion channel (porin) as part of a putatively two-component transport system for 4-toluenesulphonate in Comamonas testosteroni T-2.</title>
        <authorList>
            <person name="Mampel J."/>
            <person name="Maier E."/>
            <person name="Tralau T."/>
            <person name="Ruff J."/>
            <person name="Benz R."/>
            <person name="Cook A.M."/>
        </authorList>
    </citation>
    <scope>NUCLEOTIDE SEQUENCE [GENOMIC DNA]</scope>
    <source>
        <strain>DSM 6577 / T-2</strain>
    </source>
</reference>
<reference key="5">
    <citation type="journal article" date="1991" name="J. Gen. Microbiol.">
        <title>Degradation of p-toluic acid (p-toluenecarboxylic acid) and p-toluenesulphonic acid via oxygenation of the methyl sidechain is initiated by the same set of enzymes in Comamonas testosteroni T-2.</title>
        <authorList>
            <person name="Locher H.H."/>
            <person name="Malli C."/>
            <person name="Hooper S.W."/>
            <person name="Vorherr T."/>
            <person name="Leisinger T."/>
            <person name="Cook A.M."/>
        </authorList>
    </citation>
    <scope>FUNCTION</scope>
    <scope>SUBSTRATE SPECIFICITY</scope>
</reference>
<reference key="6">
    <citation type="journal article" date="1996" name="Microbiology">
        <title>Degradative pathways for p-toluenecarboxylate and p-toluenesulfonate and their multicomponent oxygenases in Comamonas testosteroni strains PSB-4 and T-2.</title>
        <authorList>
            <person name="Junker F."/>
            <person name="Saller E."/>
            <person name="Schlaefli Oppenberg H.R."/>
            <person name="Kroneck P.M."/>
            <person name="Leisinger T."/>
            <person name="Cook A.M."/>
        </authorList>
    </citation>
    <scope>FUNCTION</scope>
    <scope>CATALYTIC ACTIVITY</scope>
</reference>
<organism>
    <name type="scientific">Comamonas testosteroni</name>
    <name type="common">Pseudomonas testosteroni</name>
    <dbReference type="NCBI Taxonomy" id="285"/>
    <lineage>
        <taxon>Bacteria</taxon>
        <taxon>Pseudomonadati</taxon>
        <taxon>Pseudomonadota</taxon>
        <taxon>Betaproteobacteria</taxon>
        <taxon>Burkholderiales</taxon>
        <taxon>Comamonadaceae</taxon>
        <taxon>Comamonas</taxon>
    </lineage>
</organism>
<comment type="function">
    <text evidence="3 5">Involved in the toluene-4-sulfonate degradation pathway. Does not discriminate between the sulfonate and the carboxyl substituents and can also be involved in the p-toluenecarboxylate degradation pathway.</text>
</comment>
<comment type="catalytic activity">
    <reaction evidence="3">
        <text>4-(hydroxymethyl)benzenesulfonate + NAD(+) = 4-formylbenzenesulfonate + NADH + H(+)</text>
        <dbReference type="Rhea" id="RHEA:24412"/>
        <dbReference type="ChEBI" id="CHEBI:11944"/>
        <dbReference type="ChEBI" id="CHEBI:11987"/>
        <dbReference type="ChEBI" id="CHEBI:15378"/>
        <dbReference type="ChEBI" id="CHEBI:57540"/>
        <dbReference type="ChEBI" id="CHEBI:57945"/>
        <dbReference type="EC" id="1.1.1.257"/>
    </reaction>
</comment>
<comment type="subunit">
    <text evidence="4">Homodimer.</text>
</comment>
<comment type="similarity">
    <text evidence="6">Belongs to the aldehyde dehydrogenase family.</text>
</comment>
<sequence>MSTVLYRCPELLIGGEWRPGRHEQRLVVRNPATGEPLDELRLASADDLQLALQTTQQAFEHWRQVPAHERCARLERGVARLRENTERIAHLLTLEQGKTLAEARMECAMAADLIKWYAEEARRVYGRVIPARLPNSRMEVFKFPVGPVAAFSPWNFPLVLSARKLGGAIAAGCSIVLKAAEETPASVAAMVDCLNQELPPGVVQLLYGVPAEVSQALIASPVVRKVTFTGSVPVGRHLAELSARHLKRITLELGGHAPVIVCGDADIARTVNLMVQHKFRNAGQACLAPTRFFVDRRIYGDFVDAFGATQALRVGAGMAAETQMGPVASARRQAAVQDLIARSVAAGARPVASAVPEAGYFVAPTLLADVPLDAPVMSEEPFGPVACAVPFDSLDQAIAQANHNPYGLAGYLFTDSAKAILAVSERLEVGSLAVNGMGVSVPEAPFGGVKDSGYGSESGTEGMEAFLDTKFMHYVA</sequence>